<proteinExistence type="evidence at transcript level"/>
<name>HMN6_HUMAN</name>
<gene>
    <name evidence="6" type="primary">MTRNR2L6</name>
</gene>
<keyword id="KW-0963">Cytoplasm</keyword>
<keyword id="KW-1185">Reference proteome</keyword>
<keyword id="KW-0964">Secreted</keyword>
<evidence type="ECO:0000250" key="1">
    <source>
        <dbReference type="UniProtKB" id="Q8IVG9"/>
    </source>
</evidence>
<evidence type="ECO:0000269" key="2">
    <source>
    </source>
</evidence>
<evidence type="ECO:0000303" key="3">
    <source>
    </source>
</evidence>
<evidence type="ECO:0000305" key="4"/>
<evidence type="ECO:0000305" key="5">
    <source>
    </source>
</evidence>
<evidence type="ECO:0000312" key="6">
    <source>
        <dbReference type="HGNC" id="HGNC:37163"/>
    </source>
</evidence>
<accession>P0CJ73</accession>
<reference key="1">
    <citation type="journal article" date="2003" name="Nature">
        <title>The DNA sequence of human chromosome 7.</title>
        <authorList>
            <person name="Hillier L.W."/>
            <person name="Fulton R.S."/>
            <person name="Fulton L.A."/>
            <person name="Graves T.A."/>
            <person name="Pepin K.H."/>
            <person name="Wagner-McPherson C."/>
            <person name="Layman D."/>
            <person name="Maas J."/>
            <person name="Jaeger S."/>
            <person name="Walker R."/>
            <person name="Wylie K."/>
            <person name="Sekhon M."/>
            <person name="Becker M.C."/>
            <person name="O'Laughlin M.D."/>
            <person name="Schaller M.E."/>
            <person name="Fewell G.A."/>
            <person name="Delehaunty K.D."/>
            <person name="Miner T.L."/>
            <person name="Nash W.E."/>
            <person name="Cordes M."/>
            <person name="Du H."/>
            <person name="Sun H."/>
            <person name="Edwards J."/>
            <person name="Bradshaw-Cordum H."/>
            <person name="Ali J."/>
            <person name="Andrews S."/>
            <person name="Isak A."/>
            <person name="Vanbrunt A."/>
            <person name="Nguyen C."/>
            <person name="Du F."/>
            <person name="Lamar B."/>
            <person name="Courtney L."/>
            <person name="Kalicki J."/>
            <person name="Ozersky P."/>
            <person name="Bielicki L."/>
            <person name="Scott K."/>
            <person name="Holmes A."/>
            <person name="Harkins R."/>
            <person name="Harris A."/>
            <person name="Strong C.M."/>
            <person name="Hou S."/>
            <person name="Tomlinson C."/>
            <person name="Dauphin-Kohlberg S."/>
            <person name="Kozlowicz-Reilly A."/>
            <person name="Leonard S."/>
            <person name="Rohlfing T."/>
            <person name="Rock S.M."/>
            <person name="Tin-Wollam A.-M."/>
            <person name="Abbott A."/>
            <person name="Minx P."/>
            <person name="Maupin R."/>
            <person name="Strowmatt C."/>
            <person name="Latreille P."/>
            <person name="Miller N."/>
            <person name="Johnson D."/>
            <person name="Murray J."/>
            <person name="Woessner J.P."/>
            <person name="Wendl M.C."/>
            <person name="Yang S.-P."/>
            <person name="Schultz B.R."/>
            <person name="Wallis J.W."/>
            <person name="Spieth J."/>
            <person name="Bieri T.A."/>
            <person name="Nelson J.O."/>
            <person name="Berkowicz N."/>
            <person name="Wohldmann P.E."/>
            <person name="Cook L.L."/>
            <person name="Hickenbotham M.T."/>
            <person name="Eldred J."/>
            <person name="Williams D."/>
            <person name="Bedell J.A."/>
            <person name="Mardis E.R."/>
            <person name="Clifton S.W."/>
            <person name="Chissoe S.L."/>
            <person name="Marra M.A."/>
            <person name="Raymond C."/>
            <person name="Haugen E."/>
            <person name="Gillett W."/>
            <person name="Zhou Y."/>
            <person name="James R."/>
            <person name="Phelps K."/>
            <person name="Iadanoto S."/>
            <person name="Bubb K."/>
            <person name="Simms E."/>
            <person name="Levy R."/>
            <person name="Clendenning J."/>
            <person name="Kaul R."/>
            <person name="Kent W.J."/>
            <person name="Furey T.S."/>
            <person name="Baertsch R.A."/>
            <person name="Brent M.R."/>
            <person name="Keibler E."/>
            <person name="Flicek P."/>
            <person name="Bork P."/>
            <person name="Suyama M."/>
            <person name="Bailey J.A."/>
            <person name="Portnoy M.E."/>
            <person name="Torrents D."/>
            <person name="Chinwalla A.T."/>
            <person name="Gish W.R."/>
            <person name="Eddy S.R."/>
            <person name="McPherson J.D."/>
            <person name="Olson M.V."/>
            <person name="Eichler E.E."/>
            <person name="Green E.D."/>
            <person name="Waterston R.H."/>
            <person name="Wilson R.K."/>
        </authorList>
    </citation>
    <scope>NUCLEOTIDE SEQUENCE [LARGE SCALE GENOMIC DNA]</scope>
</reference>
<reference key="2">
    <citation type="journal article" date="2009" name="Genomics">
        <title>Evidence for potential functionality of nuclearly-encoded humanin isoforms.</title>
        <authorList>
            <person name="Bodzioch M."/>
            <person name="Lapicka-Bodzioch K."/>
            <person name="Zapala B."/>
            <person name="Kamysz W."/>
            <person name="Kiec-Wilk B."/>
            <person name="Dembinska-Kiec A."/>
        </authorList>
    </citation>
    <scope>TISSUE SPECIFICITY</scope>
    <scope>INDUCTION</scope>
</reference>
<protein>
    <recommendedName>
        <fullName evidence="4">Humanin-like 6</fullName>
        <shortName evidence="3">HN6</shortName>
    </recommendedName>
    <alternativeName>
        <fullName evidence="6">MT-RNR2-like protein 6</fullName>
    </alternativeName>
</protein>
<dbReference type="EMBL" id="AC231380">
    <property type="status" value="NOT_ANNOTATED_CDS"/>
    <property type="molecule type" value="Genomic_DNA"/>
</dbReference>
<dbReference type="RefSeq" id="NP_001177416.1">
    <property type="nucleotide sequence ID" value="NM_001190487.2"/>
</dbReference>
<dbReference type="STRING" id="9606.ENSP00000473686"/>
<dbReference type="BioMuta" id="MTRNR2L6"/>
<dbReference type="PaxDb" id="9606-ENSP00000473686"/>
<dbReference type="DNASU" id="100463482"/>
<dbReference type="UCSC" id="uc003vzz.3">
    <property type="organism name" value="human"/>
</dbReference>
<dbReference type="AGR" id="HGNC:37163"/>
<dbReference type="DisGeNET" id="100463482"/>
<dbReference type="GeneCards" id="MTRNR2L6"/>
<dbReference type="HGNC" id="HGNC:37163">
    <property type="gene designation" value="MTRNR2L6"/>
</dbReference>
<dbReference type="neXtProt" id="NX_P0CJ73"/>
<dbReference type="VEuPathDB" id="HostDB:ENSG00000270672"/>
<dbReference type="HOGENOM" id="CLU_221584_0_0_1"/>
<dbReference type="InParanoid" id="P0CJ73"/>
<dbReference type="PAN-GO" id="P0CJ73">
    <property type="GO annotations" value="2 GO annotations based on evolutionary models"/>
</dbReference>
<dbReference type="PhylomeDB" id="P0CJ73"/>
<dbReference type="PathwayCommons" id="P0CJ73"/>
<dbReference type="BioGRID-ORCS" id="100463482">
    <property type="hits" value="24 hits in 671 CRISPR screens"/>
</dbReference>
<dbReference type="ChiTaRS" id="MTRNR2L6">
    <property type="organism name" value="human"/>
</dbReference>
<dbReference type="Pharos" id="P0CJ73">
    <property type="development level" value="Tdark"/>
</dbReference>
<dbReference type="PRO" id="PR:P0CJ73"/>
<dbReference type="Proteomes" id="UP000005640">
    <property type="component" value="Chromosome 7"/>
</dbReference>
<dbReference type="Bgee" id="ENSG00000270672">
    <property type="expression patterns" value="Expressed in male germ line stem cell (sensu Vertebrata) in testis and 82 other cell types or tissues"/>
</dbReference>
<dbReference type="GO" id="GO:0005737">
    <property type="term" value="C:cytoplasm"/>
    <property type="evidence" value="ECO:0007669"/>
    <property type="project" value="UniProtKB-SubCell"/>
</dbReference>
<dbReference type="GO" id="GO:0005576">
    <property type="term" value="C:extracellular region"/>
    <property type="evidence" value="ECO:0007669"/>
    <property type="project" value="UniProtKB-SubCell"/>
</dbReference>
<dbReference type="GO" id="GO:0048019">
    <property type="term" value="F:receptor antagonist activity"/>
    <property type="evidence" value="ECO:0000318"/>
    <property type="project" value="GO_Central"/>
</dbReference>
<dbReference type="GO" id="GO:1900118">
    <property type="term" value="P:negative regulation of execution phase of apoptosis"/>
    <property type="evidence" value="ECO:0000318"/>
    <property type="project" value="GO_Central"/>
</dbReference>
<dbReference type="CDD" id="cd20245">
    <property type="entry name" value="humanin"/>
    <property type="match status" value="1"/>
</dbReference>
<dbReference type="InterPro" id="IPR028139">
    <property type="entry name" value="Humanin"/>
</dbReference>
<dbReference type="PANTHER" id="PTHR33895:SF18">
    <property type="entry name" value="HUMANIN-LIKE 1-RELATED"/>
    <property type="match status" value="1"/>
</dbReference>
<dbReference type="PANTHER" id="PTHR33895">
    <property type="entry name" value="HUMANIN-LIKE 4"/>
    <property type="match status" value="1"/>
</dbReference>
<dbReference type="Pfam" id="PF15040">
    <property type="entry name" value="Humanin"/>
    <property type="match status" value="1"/>
</dbReference>
<organism>
    <name type="scientific">Homo sapiens</name>
    <name type="common">Human</name>
    <dbReference type="NCBI Taxonomy" id="9606"/>
    <lineage>
        <taxon>Eukaryota</taxon>
        <taxon>Metazoa</taxon>
        <taxon>Chordata</taxon>
        <taxon>Craniata</taxon>
        <taxon>Vertebrata</taxon>
        <taxon>Euteleostomi</taxon>
        <taxon>Mammalia</taxon>
        <taxon>Eutheria</taxon>
        <taxon>Euarchontoglires</taxon>
        <taxon>Primates</taxon>
        <taxon>Haplorrhini</taxon>
        <taxon>Catarrhini</taxon>
        <taxon>Hominidae</taxon>
        <taxon>Homo</taxon>
    </lineage>
</organism>
<feature type="chain" id="PRO_0000404555" description="Humanin-like 6">
    <location>
        <begin position="1"/>
        <end position="24"/>
    </location>
</feature>
<sequence length="24" mass="2719">MTPRGFSCLLLPTSETDLPVKRRT</sequence>
<comment type="function">
    <text evidence="1">Plays a role as a neuroprotective and antiapoptotic factor.</text>
</comment>
<comment type="subcellular location">
    <subcellularLocation>
        <location evidence="1">Secreted</location>
    </subcellularLocation>
    <subcellularLocation>
        <location evidence="1">Cytoplasm</location>
    </subcellularLocation>
</comment>
<comment type="tissue specificity">
    <text evidence="2">Expressed in skeletal muscle and testis.</text>
</comment>
<comment type="induction">
    <text evidence="2">Down-regulated 6 hours following staurosporine (STS) treatment and up-regulated 24 hours following STS treatment. Down-regulated 6 hours following beta-carotene treatment, returning to its basal level 24 hours following beta-carotene treatment.</text>
</comment>
<comment type="similarity">
    <text evidence="4">Belongs to the humanin family.</text>
</comment>
<comment type="caution">
    <text evidence="5">The humanin peptide has been shown to be biologically active but is the product of a mitochondrial gene, MT-RNR2. The mechanisms allowing the production and the secretion of humanin from the mitochondrial gene remaining unclear, the possibility exist that the physiologically active humanin peptide is encoded by one of the related genes present in the nuclear genome including the one described here (PubMed:19477263).</text>
</comment>